<proteinExistence type="evidence at protein level"/>
<protein>
    <recommendedName>
        <fullName evidence="1">Ribonuclease VapC28</fullName>
        <shortName evidence="1">RNase VapC28</shortName>
        <ecNumber evidence="1">3.1.-.-</ecNumber>
    </recommendedName>
    <alternativeName>
        <fullName evidence="1">Toxin VapC28</fullName>
    </alternativeName>
</protein>
<evidence type="ECO:0000255" key="1">
    <source>
        <dbReference type="HAMAP-Rule" id="MF_00265"/>
    </source>
</evidence>
<evidence type="ECO:0000269" key="2">
    <source>
    </source>
</evidence>
<accession>P9WF81</accession>
<accession>L0T709</accession>
<accession>O07769</accession>
<accession>P67238</accession>
<feature type="chain" id="PRO_0000221197" description="Ribonuclease VapC28">
    <location>
        <begin position="1"/>
        <end position="133"/>
    </location>
</feature>
<feature type="domain" description="PINc" evidence="1">
    <location>
        <begin position="1"/>
        <end position="124"/>
    </location>
</feature>
<feature type="binding site" evidence="1">
    <location>
        <position position="4"/>
    </location>
    <ligand>
        <name>Mg(2+)</name>
        <dbReference type="ChEBI" id="CHEBI:18420"/>
    </ligand>
</feature>
<feature type="binding site" evidence="1">
    <location>
        <position position="100"/>
    </location>
    <ligand>
        <name>Mg(2+)</name>
        <dbReference type="ChEBI" id="CHEBI:18420"/>
    </ligand>
</feature>
<name>VPC28_MYCTU</name>
<reference key="1">
    <citation type="journal article" date="1998" name="Nature">
        <title>Deciphering the biology of Mycobacterium tuberculosis from the complete genome sequence.</title>
        <authorList>
            <person name="Cole S.T."/>
            <person name="Brosch R."/>
            <person name="Parkhill J."/>
            <person name="Garnier T."/>
            <person name="Churcher C.M."/>
            <person name="Harris D.E."/>
            <person name="Gordon S.V."/>
            <person name="Eiglmeier K."/>
            <person name="Gas S."/>
            <person name="Barry C.E. III"/>
            <person name="Tekaia F."/>
            <person name="Badcock K."/>
            <person name="Basham D."/>
            <person name="Brown D."/>
            <person name="Chillingworth T."/>
            <person name="Connor R."/>
            <person name="Davies R.M."/>
            <person name="Devlin K."/>
            <person name="Feltwell T."/>
            <person name="Gentles S."/>
            <person name="Hamlin N."/>
            <person name="Holroyd S."/>
            <person name="Hornsby T."/>
            <person name="Jagels K."/>
            <person name="Krogh A."/>
            <person name="McLean J."/>
            <person name="Moule S."/>
            <person name="Murphy L.D."/>
            <person name="Oliver S."/>
            <person name="Osborne J."/>
            <person name="Quail M.A."/>
            <person name="Rajandream M.A."/>
            <person name="Rogers J."/>
            <person name="Rutter S."/>
            <person name="Seeger K."/>
            <person name="Skelton S."/>
            <person name="Squares S."/>
            <person name="Squares R."/>
            <person name="Sulston J.E."/>
            <person name="Taylor K."/>
            <person name="Whitehead S."/>
            <person name="Barrell B.G."/>
        </authorList>
    </citation>
    <scope>NUCLEOTIDE SEQUENCE [LARGE SCALE GENOMIC DNA]</scope>
    <source>
        <strain>ATCC 25618 / H37Rv</strain>
    </source>
</reference>
<reference key="2">
    <citation type="journal article" date="2009" name="PLoS Genet.">
        <title>Comprehensive functional analysis of Mycobacterium tuberculosis toxin-antitoxin systems: implications for pathogenesis, stress responses, and evolution.</title>
        <authorList>
            <person name="Ramage H.R."/>
            <person name="Connolly L.E."/>
            <person name="Cox J.S."/>
        </authorList>
    </citation>
    <scope>EXPRESSION IN M.SMEGMATIS</scope>
    <scope>FUNCTION AS A TOXIN</scope>
    <source>
        <strain>ATCC 35801 / TMC 107 / Erdman</strain>
    </source>
</reference>
<reference key="3">
    <citation type="journal article" date="2011" name="Mol. Cell. Proteomics">
        <title>Proteogenomic analysis of Mycobacterium tuberculosis by high resolution mass spectrometry.</title>
        <authorList>
            <person name="Kelkar D.S."/>
            <person name="Kumar D."/>
            <person name="Kumar P."/>
            <person name="Balakrishnan L."/>
            <person name="Muthusamy B."/>
            <person name="Yadav A.K."/>
            <person name="Shrivastava P."/>
            <person name="Marimuthu A."/>
            <person name="Anand S."/>
            <person name="Sundaram H."/>
            <person name="Kingsbury R."/>
            <person name="Harsha H.C."/>
            <person name="Nair B."/>
            <person name="Prasad T.S."/>
            <person name="Chauhan D.S."/>
            <person name="Katoch K."/>
            <person name="Katoch V.M."/>
            <person name="Kumar P."/>
            <person name="Chaerkady R."/>
            <person name="Ramachandran S."/>
            <person name="Dash D."/>
            <person name="Pandey A."/>
        </authorList>
    </citation>
    <scope>IDENTIFICATION BY MASS SPECTROMETRY [LARGE SCALE ANALYSIS]</scope>
    <source>
        <strain>ATCC 25618 / H37Rv</strain>
    </source>
</reference>
<dbReference type="EC" id="3.1.-.-" evidence="1"/>
<dbReference type="EMBL" id="AL123456">
    <property type="protein sequence ID" value="CCP43348.1"/>
    <property type="molecule type" value="Genomic_DNA"/>
</dbReference>
<dbReference type="PIR" id="D70910">
    <property type="entry name" value="D70910"/>
</dbReference>
<dbReference type="RefSeq" id="NP_215123.1">
    <property type="nucleotide sequence ID" value="NC_000962.3"/>
</dbReference>
<dbReference type="RefSeq" id="WP_003403187.1">
    <property type="nucleotide sequence ID" value="NZ_NVQJ01000033.1"/>
</dbReference>
<dbReference type="SMR" id="P9WF81"/>
<dbReference type="STRING" id="83332.Rv0609"/>
<dbReference type="PaxDb" id="83332-Rv0609"/>
<dbReference type="DNASU" id="887896"/>
<dbReference type="GeneID" id="887896"/>
<dbReference type="KEGG" id="mtu:Rv0609"/>
<dbReference type="KEGG" id="mtv:RVBD_0609"/>
<dbReference type="TubercuList" id="Rv0609"/>
<dbReference type="eggNOG" id="COG3742">
    <property type="taxonomic scope" value="Bacteria"/>
</dbReference>
<dbReference type="InParanoid" id="P9WF81"/>
<dbReference type="OrthoDB" id="32625at2"/>
<dbReference type="PhylomeDB" id="P9WF81"/>
<dbReference type="Proteomes" id="UP000001584">
    <property type="component" value="Chromosome"/>
</dbReference>
<dbReference type="GO" id="GO:0000287">
    <property type="term" value="F:magnesium ion binding"/>
    <property type="evidence" value="ECO:0007669"/>
    <property type="project" value="UniProtKB-UniRule"/>
</dbReference>
<dbReference type="GO" id="GO:0004521">
    <property type="term" value="F:RNA endonuclease activity"/>
    <property type="evidence" value="ECO:0000318"/>
    <property type="project" value="GO_Central"/>
</dbReference>
<dbReference type="GO" id="GO:0045926">
    <property type="term" value="P:negative regulation of growth"/>
    <property type="evidence" value="ECO:0000315"/>
    <property type="project" value="MTBBASE"/>
</dbReference>
<dbReference type="CDD" id="cd09871">
    <property type="entry name" value="PIN_MtVapC28-VapC30-like"/>
    <property type="match status" value="1"/>
</dbReference>
<dbReference type="Gene3D" id="3.40.50.1010">
    <property type="entry name" value="5'-nuclease"/>
    <property type="match status" value="1"/>
</dbReference>
<dbReference type="HAMAP" id="MF_00265">
    <property type="entry name" value="VapC_Nob1"/>
    <property type="match status" value="1"/>
</dbReference>
<dbReference type="InterPro" id="IPR029060">
    <property type="entry name" value="PIN-like_dom_sf"/>
</dbReference>
<dbReference type="InterPro" id="IPR002716">
    <property type="entry name" value="PIN_dom"/>
</dbReference>
<dbReference type="InterPro" id="IPR050556">
    <property type="entry name" value="Type_II_TA_system_RNase"/>
</dbReference>
<dbReference type="InterPro" id="IPR022907">
    <property type="entry name" value="VapC_family"/>
</dbReference>
<dbReference type="PANTHER" id="PTHR33653">
    <property type="entry name" value="RIBONUCLEASE VAPC2"/>
    <property type="match status" value="1"/>
</dbReference>
<dbReference type="PANTHER" id="PTHR33653:SF1">
    <property type="entry name" value="RIBONUCLEASE VAPC2"/>
    <property type="match status" value="1"/>
</dbReference>
<dbReference type="Pfam" id="PF01850">
    <property type="entry name" value="PIN"/>
    <property type="match status" value="1"/>
</dbReference>
<dbReference type="SUPFAM" id="SSF88723">
    <property type="entry name" value="PIN domain-like"/>
    <property type="match status" value="1"/>
</dbReference>
<organism>
    <name type="scientific">Mycobacterium tuberculosis (strain ATCC 25618 / H37Rv)</name>
    <dbReference type="NCBI Taxonomy" id="83332"/>
    <lineage>
        <taxon>Bacteria</taxon>
        <taxon>Bacillati</taxon>
        <taxon>Actinomycetota</taxon>
        <taxon>Actinomycetes</taxon>
        <taxon>Mycobacteriales</taxon>
        <taxon>Mycobacteriaceae</taxon>
        <taxon>Mycobacterium</taxon>
        <taxon>Mycobacterium tuberculosis complex</taxon>
    </lineage>
</organism>
<keyword id="KW-0378">Hydrolase</keyword>
<keyword id="KW-0460">Magnesium</keyword>
<keyword id="KW-0479">Metal-binding</keyword>
<keyword id="KW-0540">Nuclease</keyword>
<keyword id="KW-1185">Reference proteome</keyword>
<keyword id="KW-1277">Toxin-antitoxin system</keyword>
<sequence>MIVDTSAIIAILRDEDDAAAYADALANADVRRLSAASYLECGIVLDSQRDPVISRALDELIEEAEFVVEPVTERQARLARAAYADFGRGSGHPAGLNFGDCLSYALAIDRREPLLWKGNDFGHTGVQRALDRR</sequence>
<gene>
    <name evidence="1" type="primary">vapC28</name>
    <name type="ordered locus">Rv0609</name>
    <name type="ORF">MTCY19H5.13c</name>
</gene>
<comment type="function">
    <text evidence="1 2">Toxic component of a type II toxin-antitoxin (TA) system. An RNase (By similarity). Upon expression in M.smegmatis inhibits colony formation. Its toxic effect is neutralized by coexpression with cognate antitoxin VapB28.</text>
</comment>
<comment type="cofactor">
    <cofactor evidence="1">
        <name>Mg(2+)</name>
        <dbReference type="ChEBI" id="CHEBI:18420"/>
    </cofactor>
</comment>
<comment type="similarity">
    <text evidence="1">Belongs to the PINc/VapC protein family.</text>
</comment>